<protein>
    <recommendedName>
        <fullName evidence="1">Proteasome subunit alpha</fullName>
    </recommendedName>
    <alternativeName>
        <fullName evidence="1">20S proteasome alpha subunit</fullName>
    </alternativeName>
    <alternativeName>
        <fullName evidence="1">Proteasome core protein PrcA</fullName>
    </alternativeName>
</protein>
<accession>D2S6E3</accession>
<dbReference type="EMBL" id="CP001867">
    <property type="protein sequence ID" value="ADB75317.1"/>
    <property type="molecule type" value="Genomic_DNA"/>
</dbReference>
<dbReference type="RefSeq" id="WP_012948750.1">
    <property type="nucleotide sequence ID" value="NC_013757.1"/>
</dbReference>
<dbReference type="SMR" id="D2S6E3"/>
<dbReference type="STRING" id="526225.Gobs_2683"/>
<dbReference type="MEROPS" id="T01.980"/>
<dbReference type="KEGG" id="gob:Gobs_2683"/>
<dbReference type="eggNOG" id="COG0638">
    <property type="taxonomic scope" value="Bacteria"/>
</dbReference>
<dbReference type="HOGENOM" id="CLU_071031_0_0_11"/>
<dbReference type="OrthoDB" id="9775643at2"/>
<dbReference type="UniPathway" id="UPA00997"/>
<dbReference type="Proteomes" id="UP000001382">
    <property type="component" value="Chromosome"/>
</dbReference>
<dbReference type="GO" id="GO:0005737">
    <property type="term" value="C:cytoplasm"/>
    <property type="evidence" value="ECO:0007669"/>
    <property type="project" value="UniProtKB-SubCell"/>
</dbReference>
<dbReference type="GO" id="GO:0019773">
    <property type="term" value="C:proteasome core complex, alpha-subunit complex"/>
    <property type="evidence" value="ECO:0007669"/>
    <property type="project" value="UniProtKB-UniRule"/>
</dbReference>
<dbReference type="GO" id="GO:0004298">
    <property type="term" value="F:threonine-type endopeptidase activity"/>
    <property type="evidence" value="ECO:0007669"/>
    <property type="project" value="InterPro"/>
</dbReference>
<dbReference type="GO" id="GO:0019941">
    <property type="term" value="P:modification-dependent protein catabolic process"/>
    <property type="evidence" value="ECO:0007669"/>
    <property type="project" value="UniProtKB-UniRule"/>
</dbReference>
<dbReference type="GO" id="GO:0010498">
    <property type="term" value="P:proteasomal protein catabolic process"/>
    <property type="evidence" value="ECO:0007669"/>
    <property type="project" value="UniProtKB-UniRule"/>
</dbReference>
<dbReference type="CDD" id="cd01906">
    <property type="entry name" value="proteasome_protease_HslV"/>
    <property type="match status" value="1"/>
</dbReference>
<dbReference type="Gene3D" id="3.60.20.10">
    <property type="entry name" value="Glutamine Phosphoribosylpyrophosphate, subunit 1, domain 1"/>
    <property type="match status" value="1"/>
</dbReference>
<dbReference type="HAMAP" id="MF_00289_B">
    <property type="entry name" value="Proteasome_A_B"/>
    <property type="match status" value="1"/>
</dbReference>
<dbReference type="InterPro" id="IPR029055">
    <property type="entry name" value="Ntn_hydrolases_N"/>
</dbReference>
<dbReference type="InterPro" id="IPR023332">
    <property type="entry name" value="Proteasome_alpha-type"/>
</dbReference>
<dbReference type="InterPro" id="IPR022296">
    <property type="entry name" value="Proteasome_asu_bac"/>
</dbReference>
<dbReference type="InterPro" id="IPR001353">
    <property type="entry name" value="Proteasome_sua/b"/>
</dbReference>
<dbReference type="NCBIfam" id="TIGR03691">
    <property type="entry name" value="20S_bact_alpha"/>
    <property type="match status" value="1"/>
</dbReference>
<dbReference type="Pfam" id="PF00227">
    <property type="entry name" value="Proteasome"/>
    <property type="match status" value="1"/>
</dbReference>
<dbReference type="SUPFAM" id="SSF56235">
    <property type="entry name" value="N-terminal nucleophile aminohydrolases (Ntn hydrolases)"/>
    <property type="match status" value="1"/>
</dbReference>
<dbReference type="PROSITE" id="PS51475">
    <property type="entry name" value="PROTEASOME_ALPHA_2"/>
    <property type="match status" value="1"/>
</dbReference>
<name>PSA_GEOOG</name>
<feature type="chain" id="PRO_0000397140" description="Proteasome subunit alpha">
    <location>
        <begin position="1"/>
        <end position="287"/>
    </location>
</feature>
<feature type="region of interest" description="Disordered" evidence="2">
    <location>
        <begin position="241"/>
        <end position="287"/>
    </location>
</feature>
<feature type="compositionally biased region" description="Low complexity" evidence="2">
    <location>
        <begin position="262"/>
        <end position="275"/>
    </location>
</feature>
<feature type="compositionally biased region" description="Gly residues" evidence="2">
    <location>
        <begin position="276"/>
        <end position="287"/>
    </location>
</feature>
<keyword id="KW-0963">Cytoplasm</keyword>
<keyword id="KW-0647">Proteasome</keyword>
<keyword id="KW-1185">Reference proteome</keyword>
<gene>
    <name evidence="1" type="primary">prcA</name>
    <name type="ordered locus">Gobs_2683</name>
</gene>
<reference key="1">
    <citation type="submission" date="2010-01" db="EMBL/GenBank/DDBJ databases">
        <title>The complete genome of Geodermatophilus obscurus DSM 43160.</title>
        <authorList>
            <consortium name="US DOE Joint Genome Institute (JGI-PGF)"/>
            <person name="Lucas S."/>
            <person name="Copeland A."/>
            <person name="Lapidus A."/>
            <person name="Glavina del Rio T."/>
            <person name="Dalin E."/>
            <person name="Tice H."/>
            <person name="Bruce D."/>
            <person name="Goodwin L."/>
            <person name="Pitluck S."/>
            <person name="Kyrpides N."/>
            <person name="Mavromatis K."/>
            <person name="Ivanova N."/>
            <person name="Munk A.C."/>
            <person name="Brettin T."/>
            <person name="Detter J.C."/>
            <person name="Han C."/>
            <person name="Larimer F."/>
            <person name="Land M."/>
            <person name="Hauser L."/>
            <person name="Markowitz V."/>
            <person name="Cheng J.-F."/>
            <person name="Hugenholtz P."/>
            <person name="Woyke T."/>
            <person name="Wu D."/>
            <person name="Jando M."/>
            <person name="Schneider S."/>
            <person name="Klenk H.-P."/>
            <person name="Eisen J.A."/>
        </authorList>
    </citation>
    <scope>NUCLEOTIDE SEQUENCE [LARGE SCALE GENOMIC DNA]</scope>
    <source>
        <strain>ATCC 25078 / DSM 43160 / JCM 3152 / CCUG 61914 / KCC A-0152 / KCTC 9177 / NBRC 13315 / NRRL B-3577 / G-20</strain>
    </source>
</reference>
<proteinExistence type="inferred from homology"/>
<sequence length="287" mass="30406">MTMPYYASPEQLMRDKSEYARKGISRGRSVAVVTYADGVLFIAENPSSTLHKVGELYDRIGFAAVGRYSEFESLRVAGVRLADVRGYSYNRRDVTGRVIANAYAQTLGEVFTQQMKPFEVELCVAEVGETPETDQLYRLTFDGSVVDEPDFVVMGGQAEAVSANLREHFLPGMGLAEALRVGVQALSAVSPATSAGNGGPALLTAEQLEVAVLDRRRPKRAFRRIAGAALRPLLDRQEEDGVVAGEEPHTAAHAPSVPQPGAPAGLGDPGAPDTGGTAGSGGEAPTT</sequence>
<comment type="function">
    <text evidence="1">Component of the proteasome core, a large protease complex with broad specificity involved in protein degradation.</text>
</comment>
<comment type="activity regulation">
    <text evidence="1">The formation of the proteasomal ATPase ARC-20S proteasome complex, likely via the docking of the C-termini of ARC into the intersubunit pockets in the alpha-rings, may trigger opening of the gate for substrate entry. Interconversion between the open-gate and close-gate conformations leads to a dynamic regulation of the 20S proteasome proteolysis activity.</text>
</comment>
<comment type="pathway">
    <text evidence="1">Protein degradation; proteasomal Pup-dependent pathway.</text>
</comment>
<comment type="subunit">
    <text evidence="1">The 20S proteasome core is composed of 14 alpha and 14 beta subunits that assemble into four stacked heptameric rings, resulting in a barrel-shaped structure. The two inner rings, each composed of seven catalytic beta subunits, are sandwiched by two outer rings, each composed of seven alpha subunits. The catalytic chamber with the active sites is on the inside of the barrel. Has a gated structure, the ends of the cylinder being occluded by the N-termini of the alpha-subunits. Is capped by the proteasome-associated ATPase, ARC.</text>
</comment>
<comment type="subcellular location">
    <subcellularLocation>
        <location evidence="1">Cytoplasm</location>
    </subcellularLocation>
</comment>
<comment type="similarity">
    <text evidence="1">Belongs to the peptidase T1A family.</text>
</comment>
<organism>
    <name type="scientific">Geodermatophilus obscurus (strain ATCC 25078 / DSM 43160 / JCM 3152 / CCUG 61914 / KCC A-0152 / KCTC 9177 / NBRC 13315 / NRRL B-3577 / G-20)</name>
    <dbReference type="NCBI Taxonomy" id="526225"/>
    <lineage>
        <taxon>Bacteria</taxon>
        <taxon>Bacillati</taxon>
        <taxon>Actinomycetota</taxon>
        <taxon>Actinomycetes</taxon>
        <taxon>Geodermatophilales</taxon>
        <taxon>Geodermatophilaceae</taxon>
        <taxon>Geodermatophilus</taxon>
    </lineage>
</organism>
<evidence type="ECO:0000255" key="1">
    <source>
        <dbReference type="HAMAP-Rule" id="MF_00289"/>
    </source>
</evidence>
<evidence type="ECO:0000256" key="2">
    <source>
        <dbReference type="SAM" id="MobiDB-lite"/>
    </source>
</evidence>